<dbReference type="EMBL" id="AB013729">
    <property type="protein sequence ID" value="BAA76294.1"/>
    <property type="molecule type" value="mRNA"/>
</dbReference>
<dbReference type="CCDS" id="CCDS17604.1"/>
<dbReference type="RefSeq" id="NP_001258953.1">
    <property type="nucleotide sequence ID" value="NM_001272024.1"/>
</dbReference>
<dbReference type="RefSeq" id="NP_001415622.1">
    <property type="nucleotide sequence ID" value="NM_001428693.1"/>
</dbReference>
<dbReference type="RefSeq" id="NP_001415623.1">
    <property type="nucleotide sequence ID" value="NM_001428694.1"/>
</dbReference>
<dbReference type="RefSeq" id="NP_001415624.1">
    <property type="nucleotide sequence ID" value="NM_001428695.1"/>
</dbReference>
<dbReference type="RefSeq" id="NP_035481.1">
    <property type="nucleotide sequence ID" value="NM_011351.3"/>
</dbReference>
<dbReference type="RefSeq" id="XP_006501268.1">
    <property type="nucleotide sequence ID" value="XM_006501205.1"/>
</dbReference>
<dbReference type="SMR" id="Q9WTM3"/>
<dbReference type="BioGRID" id="203175">
    <property type="interactions" value="2"/>
</dbReference>
<dbReference type="FunCoup" id="Q9WTM3">
    <property type="interactions" value="183"/>
</dbReference>
<dbReference type="STRING" id="10090.ENSMUSP00000088333"/>
<dbReference type="GlyCosmos" id="Q9WTM3">
    <property type="glycosylation" value="3 sites, No reported glycans"/>
</dbReference>
<dbReference type="GlyGen" id="Q9WTM3">
    <property type="glycosylation" value="3 sites, 1 N-linked glycan (1 site)"/>
</dbReference>
<dbReference type="iPTMnet" id="Q9WTM3"/>
<dbReference type="PhosphoSitePlus" id="Q9WTM3"/>
<dbReference type="PaxDb" id="10090-ENSMUSP00000129081"/>
<dbReference type="ProteomicsDB" id="256776"/>
<dbReference type="Antibodypedia" id="34050">
    <property type="antibodies" value="112 antibodies from 12 providers"/>
</dbReference>
<dbReference type="DNASU" id="20360"/>
<dbReference type="Ensembl" id="ENSMUST00000090821.10">
    <property type="protein sequence ID" value="ENSMUSP00000088331.4"/>
    <property type="gene ID" value="ENSMUSG00000038777.20"/>
</dbReference>
<dbReference type="Ensembl" id="ENSMUST00000202315.3">
    <property type="protein sequence ID" value="ENSMUSP00000144039.2"/>
    <property type="gene ID" value="ENSMUSG00000038777.20"/>
</dbReference>
<dbReference type="GeneID" id="20360"/>
<dbReference type="KEGG" id="mmu:20360"/>
<dbReference type="UCSC" id="uc008qij.2">
    <property type="organism name" value="mouse"/>
</dbReference>
<dbReference type="AGR" id="MGI:1338032"/>
<dbReference type="CTD" id="10500"/>
<dbReference type="MGI" id="MGI:1338032">
    <property type="gene designation" value="Sema6c"/>
</dbReference>
<dbReference type="VEuPathDB" id="HostDB:ENSMUSG00000038777"/>
<dbReference type="eggNOG" id="KOG3611">
    <property type="taxonomic scope" value="Eukaryota"/>
</dbReference>
<dbReference type="GeneTree" id="ENSGT00940000158641"/>
<dbReference type="HOGENOM" id="CLU_009051_2_1_1"/>
<dbReference type="InParanoid" id="Q9WTM3"/>
<dbReference type="OMA" id="DMKNCAM"/>
<dbReference type="OrthoDB" id="9988752at2759"/>
<dbReference type="PhylomeDB" id="Q9WTM3"/>
<dbReference type="BioGRID-ORCS" id="20360">
    <property type="hits" value="4 hits in 79 CRISPR screens"/>
</dbReference>
<dbReference type="PRO" id="PR:Q9WTM3"/>
<dbReference type="Proteomes" id="UP000000589">
    <property type="component" value="Chromosome 3"/>
</dbReference>
<dbReference type="RNAct" id="Q9WTM3">
    <property type="molecule type" value="protein"/>
</dbReference>
<dbReference type="Bgee" id="ENSMUSG00000038777">
    <property type="expression patterns" value="Expressed in embryonic brain and 121 other cell types or tissues"/>
</dbReference>
<dbReference type="ExpressionAtlas" id="Q9WTM3">
    <property type="expression patterns" value="baseline and differential"/>
</dbReference>
<dbReference type="GO" id="GO:0005886">
    <property type="term" value="C:plasma membrane"/>
    <property type="evidence" value="ECO:0007669"/>
    <property type="project" value="UniProtKB-SubCell"/>
</dbReference>
<dbReference type="GO" id="GO:0030215">
    <property type="term" value="F:semaphorin receptor binding"/>
    <property type="evidence" value="ECO:0000353"/>
    <property type="project" value="MGI"/>
</dbReference>
<dbReference type="GO" id="GO:0030154">
    <property type="term" value="P:cell differentiation"/>
    <property type="evidence" value="ECO:0007669"/>
    <property type="project" value="UniProtKB-KW"/>
</dbReference>
<dbReference type="GO" id="GO:0007399">
    <property type="term" value="P:nervous system development"/>
    <property type="evidence" value="ECO:0007669"/>
    <property type="project" value="UniProtKB-KW"/>
</dbReference>
<dbReference type="FunFam" id="2.130.10.10:FF:000184">
    <property type="entry name" value="semaphorin-6C isoform X1"/>
    <property type="match status" value="1"/>
</dbReference>
<dbReference type="FunFam" id="3.30.1680.10:FF:000015">
    <property type="entry name" value="semaphorin-6C isoform X1"/>
    <property type="match status" value="1"/>
</dbReference>
<dbReference type="Gene3D" id="3.30.1680.10">
    <property type="entry name" value="ligand-binding face of the semaphorins, domain 2"/>
    <property type="match status" value="1"/>
</dbReference>
<dbReference type="Gene3D" id="2.130.10.10">
    <property type="entry name" value="YVTN repeat-like/Quinoprotein amine dehydrogenase"/>
    <property type="match status" value="1"/>
</dbReference>
<dbReference type="InterPro" id="IPR001627">
    <property type="entry name" value="Semap_dom"/>
</dbReference>
<dbReference type="InterPro" id="IPR036352">
    <property type="entry name" value="Semap_dom_sf"/>
</dbReference>
<dbReference type="InterPro" id="IPR027231">
    <property type="entry name" value="Semaphorin"/>
</dbReference>
<dbReference type="InterPro" id="IPR015943">
    <property type="entry name" value="WD40/YVTN_repeat-like_dom_sf"/>
</dbReference>
<dbReference type="PANTHER" id="PTHR11036">
    <property type="entry name" value="SEMAPHORIN"/>
    <property type="match status" value="1"/>
</dbReference>
<dbReference type="PANTHER" id="PTHR11036:SF11">
    <property type="entry name" value="SEMAPHORIN-6C"/>
    <property type="match status" value="1"/>
</dbReference>
<dbReference type="Pfam" id="PF01403">
    <property type="entry name" value="Sema"/>
    <property type="match status" value="1"/>
</dbReference>
<dbReference type="SMART" id="SM00630">
    <property type="entry name" value="Sema"/>
    <property type="match status" value="1"/>
</dbReference>
<dbReference type="SUPFAM" id="SSF103575">
    <property type="entry name" value="Plexin repeat"/>
    <property type="match status" value="1"/>
</dbReference>
<dbReference type="SUPFAM" id="SSF101912">
    <property type="entry name" value="Sema domain"/>
    <property type="match status" value="1"/>
</dbReference>
<dbReference type="PROSITE" id="PS51004">
    <property type="entry name" value="SEMA"/>
    <property type="match status" value="1"/>
</dbReference>
<protein>
    <recommendedName>
        <fullName>Semaphorin-6C</fullName>
    </recommendedName>
    <alternativeName>
        <fullName>Semaphorin-Y</fullName>
        <shortName>Sema Y</shortName>
    </alternativeName>
</protein>
<evidence type="ECO:0000250" key="1"/>
<evidence type="ECO:0000255" key="2"/>
<evidence type="ECO:0000255" key="3">
    <source>
        <dbReference type="PROSITE-ProRule" id="PRU00352"/>
    </source>
</evidence>
<evidence type="ECO:0000256" key="4">
    <source>
        <dbReference type="SAM" id="MobiDB-lite"/>
    </source>
</evidence>
<evidence type="ECO:0000305" key="5"/>
<feature type="signal peptide" evidence="2">
    <location>
        <begin position="1"/>
        <end position="25"/>
    </location>
</feature>
<feature type="chain" id="PRO_0000032345" description="Semaphorin-6C">
    <location>
        <begin position="26"/>
        <end position="931"/>
    </location>
</feature>
<feature type="topological domain" description="Extracellular" evidence="2">
    <location>
        <begin position="26"/>
        <end position="605"/>
    </location>
</feature>
<feature type="transmembrane region" description="Helical" evidence="2">
    <location>
        <begin position="606"/>
        <end position="626"/>
    </location>
</feature>
<feature type="topological domain" description="Cytoplasmic" evidence="2">
    <location>
        <begin position="627"/>
        <end position="931"/>
    </location>
</feature>
<feature type="domain" description="Sema" evidence="3">
    <location>
        <begin position="31"/>
        <end position="517"/>
    </location>
</feature>
<feature type="region of interest" description="Disordered" evidence="4">
    <location>
        <begin position="556"/>
        <end position="591"/>
    </location>
</feature>
<feature type="region of interest" description="Disordered" evidence="4">
    <location>
        <begin position="655"/>
        <end position="747"/>
    </location>
</feature>
<feature type="region of interest" description="Disordered" evidence="4">
    <location>
        <begin position="777"/>
        <end position="931"/>
    </location>
</feature>
<feature type="compositionally biased region" description="Low complexity" evidence="4">
    <location>
        <begin position="693"/>
        <end position="708"/>
    </location>
</feature>
<feature type="compositionally biased region" description="Basic and acidic residues" evidence="4">
    <location>
        <begin position="893"/>
        <end position="906"/>
    </location>
</feature>
<feature type="compositionally biased region" description="Pro residues" evidence="4">
    <location>
        <begin position="911"/>
        <end position="923"/>
    </location>
</feature>
<feature type="glycosylation site" description="N-linked (GlcNAc...) asparagine" evidence="2">
    <location>
        <position position="71"/>
    </location>
</feature>
<feature type="glycosylation site" description="N-linked (GlcNAc...) asparagine" evidence="2">
    <location>
        <position position="287"/>
    </location>
</feature>
<feature type="glycosylation site" description="N-linked (GlcNAc...) asparagine" evidence="2">
    <location>
        <position position="438"/>
    </location>
</feature>
<feature type="disulfide bond" evidence="3">
    <location>
        <begin position="112"/>
        <end position="122"/>
    </location>
</feature>
<feature type="disulfide bond" evidence="3">
    <location>
        <begin position="140"/>
        <end position="149"/>
    </location>
</feature>
<feature type="disulfide bond" evidence="3">
    <location>
        <begin position="263"/>
        <end position="374"/>
    </location>
</feature>
<feature type="disulfide bond" evidence="3">
    <location>
        <begin position="288"/>
        <end position="333"/>
    </location>
</feature>
<feature type="disulfide bond" evidence="3">
    <location>
        <begin position="480"/>
        <end position="511"/>
    </location>
</feature>
<feature type="disulfide bond" evidence="3">
    <location>
        <begin position="520"/>
        <end position="538"/>
    </location>
</feature>
<feature type="disulfide bond" evidence="3">
    <location>
        <begin position="526"/>
        <end position="571"/>
    </location>
</feature>
<feature type="disulfide bond" evidence="3">
    <location>
        <begin position="530"/>
        <end position="546"/>
    </location>
</feature>
<name>SEM6C_MOUSE</name>
<proteinExistence type="evidence at transcript level"/>
<gene>
    <name type="primary">Sema6c</name>
    <name type="synonym">Semay</name>
</gene>
<sequence length="931" mass="99538">MPRAPHSMPLLLLLLLLSSLPQAQAAFPQDPTPLLTSDLQGASPSSWFRGLEDDAVAAELGLDFQRFLTLNRTLLVAARDHVFSFDLQAQEEGEGLVPNKFLTWRSQDMENCAVRGKLTDECYNYIRVLVPWNSQTLLACGTNSFSPMCRSYGITSLQQEGEELSGQARCPFDATQSTVAIFAEGSLYSATAADFQASDAVVYRSLGPQPPLRSAKYDSKWLREPHFVYALEHGEHVYFFFREVSVEDARLGRVQFSRVARVCKRDMGGSPRALDRHWTSFLKLRLNCSVPGDSTFYFDVLQSLTGPVNLHGRSALFGVFTTQTNSIPGSAVCAFYLDDIERGFEGKFKEQRSLDGAWTPVSEDKVPSPRPGSCAGVGAAASFSSSQDLPDDVLLFIKAHPLLDPAVPPATHQPLLTLTSRALLTQVAVDGMAGPHRNTTVLFLGSNDGTVLKVLPPGGQSLGSEPIVLEEIDAYSHARCSGKRSPRAARRIIGLELDTEGHRLFVAFPGCIVYLSLSRCARHGACQRSCLASLDPYCGWHRSRGCMSIRGPGGTDVDLTGNQESTEHGDCQDGATGSQSGPGDSAYGVRRDLSPASASRSIPIPLLLACVAAAFALGASVSGLLVSCACRRANRRRSKDIETPGLPRPLSLRSLARLHGGGPEPPPPPKDGDAAQTPQLYTTFLPPPDGGSPPELACLPTPETTPELPVKHLRASGGPWEWNQNGNNASEGPGRPPRGCSGAGGPAPRVLVRPPPPGCPGQAVEVTTLEELLRYLHGPQPPRKGSEPLASAPFTSRPPASEPGASLFVDSSPMPRDGVPPLRLDVPPEGKRAAPSGRPALSAPAPRLGVGGSRRLPFPTHRAPPGLLTRVPSGGPARYSGGPGRHLLYLGRPEGHRGRSLKRVDVKSPLSPKPPLASPPQPAPHGGHFNF</sequence>
<reference key="1">
    <citation type="journal article" date="1999" name="Mol. Cell. Neurosci.">
        <title>Cloning and characterization of a novel class VI semaphorin, semaphorin Y.</title>
        <authorList>
            <person name="Kikuchi K."/>
            <person name="Chedotal A."/>
            <person name="Hanafusa H."/>
            <person name="Ujimasa Y."/>
            <person name="de Castro F."/>
            <person name="Goodman C.S."/>
            <person name="Kimura T."/>
        </authorList>
    </citation>
    <scope>NUCLEOTIDE SEQUENCE [MRNA]</scope>
    <source>
        <tissue>Embryo</tissue>
    </source>
</reference>
<comment type="function">
    <text evidence="1">May be a stop signal for the dorsal root ganglion neurons in their target areas, and possibly also for other neurons. May also be involved in the maintenance and remodeling of neuronal connections (By similarity).</text>
</comment>
<comment type="subcellular location">
    <subcellularLocation>
        <location>Cell membrane</location>
        <topology>Single-pass type I membrane protein</topology>
    </subcellularLocation>
</comment>
<comment type="similarity">
    <text evidence="5">Belongs to the semaphorin family.</text>
</comment>
<accession>Q9WTM3</accession>
<keyword id="KW-1003">Cell membrane</keyword>
<keyword id="KW-0217">Developmental protein</keyword>
<keyword id="KW-0221">Differentiation</keyword>
<keyword id="KW-1015">Disulfide bond</keyword>
<keyword id="KW-0325">Glycoprotein</keyword>
<keyword id="KW-0472">Membrane</keyword>
<keyword id="KW-0524">Neurogenesis</keyword>
<keyword id="KW-1185">Reference proteome</keyword>
<keyword id="KW-0732">Signal</keyword>
<keyword id="KW-0812">Transmembrane</keyword>
<keyword id="KW-1133">Transmembrane helix</keyword>
<organism>
    <name type="scientific">Mus musculus</name>
    <name type="common">Mouse</name>
    <dbReference type="NCBI Taxonomy" id="10090"/>
    <lineage>
        <taxon>Eukaryota</taxon>
        <taxon>Metazoa</taxon>
        <taxon>Chordata</taxon>
        <taxon>Craniata</taxon>
        <taxon>Vertebrata</taxon>
        <taxon>Euteleostomi</taxon>
        <taxon>Mammalia</taxon>
        <taxon>Eutheria</taxon>
        <taxon>Euarchontoglires</taxon>
        <taxon>Glires</taxon>
        <taxon>Rodentia</taxon>
        <taxon>Myomorpha</taxon>
        <taxon>Muroidea</taxon>
        <taxon>Muridae</taxon>
        <taxon>Murinae</taxon>
        <taxon>Mus</taxon>
        <taxon>Mus</taxon>
    </lineage>
</organism>